<accession>A6TKR6</accession>
<feature type="chain" id="PRO_1000058442" description="Glycerol kinase">
    <location>
        <begin position="1"/>
        <end position="500"/>
    </location>
</feature>
<feature type="binding site" evidence="1">
    <location>
        <position position="12"/>
    </location>
    <ligand>
        <name>ADP</name>
        <dbReference type="ChEBI" id="CHEBI:456216"/>
    </ligand>
</feature>
<feature type="binding site" evidence="1">
    <location>
        <position position="12"/>
    </location>
    <ligand>
        <name>ATP</name>
        <dbReference type="ChEBI" id="CHEBI:30616"/>
    </ligand>
</feature>
<feature type="binding site" evidence="1">
    <location>
        <position position="12"/>
    </location>
    <ligand>
        <name>sn-glycerol 3-phosphate</name>
        <dbReference type="ChEBI" id="CHEBI:57597"/>
    </ligand>
</feature>
<feature type="binding site" evidence="1">
    <location>
        <position position="13"/>
    </location>
    <ligand>
        <name>ATP</name>
        <dbReference type="ChEBI" id="CHEBI:30616"/>
    </ligand>
</feature>
<feature type="binding site" evidence="1">
    <location>
        <position position="14"/>
    </location>
    <ligand>
        <name>ATP</name>
        <dbReference type="ChEBI" id="CHEBI:30616"/>
    </ligand>
</feature>
<feature type="binding site" evidence="1">
    <location>
        <position position="16"/>
    </location>
    <ligand>
        <name>ADP</name>
        <dbReference type="ChEBI" id="CHEBI:456216"/>
    </ligand>
</feature>
<feature type="binding site" evidence="1">
    <location>
        <position position="82"/>
    </location>
    <ligand>
        <name>glycerol</name>
        <dbReference type="ChEBI" id="CHEBI:17754"/>
    </ligand>
</feature>
<feature type="binding site" evidence="1">
    <location>
        <position position="82"/>
    </location>
    <ligand>
        <name>sn-glycerol 3-phosphate</name>
        <dbReference type="ChEBI" id="CHEBI:57597"/>
    </ligand>
</feature>
<feature type="binding site" evidence="1">
    <location>
        <position position="83"/>
    </location>
    <ligand>
        <name>glycerol</name>
        <dbReference type="ChEBI" id="CHEBI:17754"/>
    </ligand>
</feature>
<feature type="binding site" evidence="1">
    <location>
        <position position="83"/>
    </location>
    <ligand>
        <name>sn-glycerol 3-phosphate</name>
        <dbReference type="ChEBI" id="CHEBI:57597"/>
    </ligand>
</feature>
<feature type="binding site" evidence="1">
    <location>
        <position position="134"/>
    </location>
    <ligand>
        <name>glycerol</name>
        <dbReference type="ChEBI" id="CHEBI:17754"/>
    </ligand>
</feature>
<feature type="binding site" evidence="1">
    <location>
        <position position="134"/>
    </location>
    <ligand>
        <name>sn-glycerol 3-phosphate</name>
        <dbReference type="ChEBI" id="CHEBI:57597"/>
    </ligand>
</feature>
<feature type="binding site" evidence="1">
    <location>
        <position position="244"/>
    </location>
    <ligand>
        <name>glycerol</name>
        <dbReference type="ChEBI" id="CHEBI:17754"/>
    </ligand>
</feature>
<feature type="binding site" evidence="1">
    <location>
        <position position="244"/>
    </location>
    <ligand>
        <name>sn-glycerol 3-phosphate</name>
        <dbReference type="ChEBI" id="CHEBI:57597"/>
    </ligand>
</feature>
<feature type="binding site" evidence="1">
    <location>
        <position position="245"/>
    </location>
    <ligand>
        <name>glycerol</name>
        <dbReference type="ChEBI" id="CHEBI:17754"/>
    </ligand>
</feature>
<feature type="binding site" evidence="1">
    <location>
        <position position="266"/>
    </location>
    <ligand>
        <name>ADP</name>
        <dbReference type="ChEBI" id="CHEBI:456216"/>
    </ligand>
</feature>
<feature type="binding site" evidence="1">
    <location>
        <position position="266"/>
    </location>
    <ligand>
        <name>ATP</name>
        <dbReference type="ChEBI" id="CHEBI:30616"/>
    </ligand>
</feature>
<feature type="binding site" evidence="1">
    <location>
        <position position="309"/>
    </location>
    <ligand>
        <name>ADP</name>
        <dbReference type="ChEBI" id="CHEBI:456216"/>
    </ligand>
</feature>
<feature type="binding site" evidence="1">
    <location>
        <position position="309"/>
    </location>
    <ligand>
        <name>ATP</name>
        <dbReference type="ChEBI" id="CHEBI:30616"/>
    </ligand>
</feature>
<feature type="binding site" evidence="1">
    <location>
        <position position="313"/>
    </location>
    <ligand>
        <name>ATP</name>
        <dbReference type="ChEBI" id="CHEBI:30616"/>
    </ligand>
</feature>
<feature type="binding site" evidence="1">
    <location>
        <position position="410"/>
    </location>
    <ligand>
        <name>ADP</name>
        <dbReference type="ChEBI" id="CHEBI:456216"/>
    </ligand>
</feature>
<feature type="binding site" evidence="1">
    <location>
        <position position="410"/>
    </location>
    <ligand>
        <name>ATP</name>
        <dbReference type="ChEBI" id="CHEBI:30616"/>
    </ligand>
</feature>
<feature type="binding site" evidence="1">
    <location>
        <position position="414"/>
    </location>
    <ligand>
        <name>ADP</name>
        <dbReference type="ChEBI" id="CHEBI:456216"/>
    </ligand>
</feature>
<gene>
    <name evidence="1" type="primary">glpK</name>
    <name type="ordered locus">Amet_0557</name>
</gene>
<evidence type="ECO:0000255" key="1">
    <source>
        <dbReference type="HAMAP-Rule" id="MF_00186"/>
    </source>
</evidence>
<keyword id="KW-0067">ATP-binding</keyword>
<keyword id="KW-0319">Glycerol metabolism</keyword>
<keyword id="KW-0418">Kinase</keyword>
<keyword id="KW-0547">Nucleotide-binding</keyword>
<keyword id="KW-1185">Reference proteome</keyword>
<keyword id="KW-0808">Transferase</keyword>
<protein>
    <recommendedName>
        <fullName evidence="1">Glycerol kinase</fullName>
        <ecNumber evidence="1">2.7.1.30</ecNumber>
    </recommendedName>
    <alternativeName>
        <fullName evidence="1">ATP:glycerol 3-phosphotransferase</fullName>
    </alternativeName>
    <alternativeName>
        <fullName evidence="1">Glycerokinase</fullName>
        <shortName evidence="1">GK</shortName>
    </alternativeName>
</protein>
<name>GLPK_ALKMQ</name>
<comment type="function">
    <text evidence="1">Key enzyme in the regulation of glycerol uptake and metabolism. Catalyzes the phosphorylation of glycerol to yield sn-glycerol 3-phosphate.</text>
</comment>
<comment type="catalytic activity">
    <reaction evidence="1">
        <text>glycerol + ATP = sn-glycerol 3-phosphate + ADP + H(+)</text>
        <dbReference type="Rhea" id="RHEA:21644"/>
        <dbReference type="ChEBI" id="CHEBI:15378"/>
        <dbReference type="ChEBI" id="CHEBI:17754"/>
        <dbReference type="ChEBI" id="CHEBI:30616"/>
        <dbReference type="ChEBI" id="CHEBI:57597"/>
        <dbReference type="ChEBI" id="CHEBI:456216"/>
        <dbReference type="EC" id="2.7.1.30"/>
    </reaction>
</comment>
<comment type="activity regulation">
    <text evidence="1">Activated by phosphorylation and inhibited by fructose 1,6-bisphosphate (FBP).</text>
</comment>
<comment type="pathway">
    <text evidence="1">Polyol metabolism; glycerol degradation via glycerol kinase pathway; sn-glycerol 3-phosphate from glycerol: step 1/1.</text>
</comment>
<comment type="subunit">
    <text evidence="1">Homotetramer and homodimer (in equilibrium).</text>
</comment>
<comment type="similarity">
    <text evidence="1">Belongs to the FGGY kinase family.</text>
</comment>
<dbReference type="EC" id="2.7.1.30" evidence="1"/>
<dbReference type="EMBL" id="CP000724">
    <property type="protein sequence ID" value="ABR46784.1"/>
    <property type="molecule type" value="Genomic_DNA"/>
</dbReference>
<dbReference type="RefSeq" id="WP_011971692.1">
    <property type="nucleotide sequence ID" value="NC_009633.1"/>
</dbReference>
<dbReference type="SMR" id="A6TKR6"/>
<dbReference type="STRING" id="293826.Amet_0557"/>
<dbReference type="KEGG" id="amt:Amet_0557"/>
<dbReference type="eggNOG" id="COG0554">
    <property type="taxonomic scope" value="Bacteria"/>
</dbReference>
<dbReference type="HOGENOM" id="CLU_009281_2_3_9"/>
<dbReference type="OrthoDB" id="9805576at2"/>
<dbReference type="UniPathway" id="UPA00618">
    <property type="reaction ID" value="UER00672"/>
</dbReference>
<dbReference type="Proteomes" id="UP000001572">
    <property type="component" value="Chromosome"/>
</dbReference>
<dbReference type="GO" id="GO:0005829">
    <property type="term" value="C:cytosol"/>
    <property type="evidence" value="ECO:0007669"/>
    <property type="project" value="TreeGrafter"/>
</dbReference>
<dbReference type="GO" id="GO:0005524">
    <property type="term" value="F:ATP binding"/>
    <property type="evidence" value="ECO:0007669"/>
    <property type="project" value="UniProtKB-UniRule"/>
</dbReference>
<dbReference type="GO" id="GO:0004370">
    <property type="term" value="F:glycerol kinase activity"/>
    <property type="evidence" value="ECO:0000250"/>
    <property type="project" value="UniProtKB"/>
</dbReference>
<dbReference type="GO" id="GO:0019563">
    <property type="term" value="P:glycerol catabolic process"/>
    <property type="evidence" value="ECO:0007669"/>
    <property type="project" value="UniProtKB-UniRule"/>
</dbReference>
<dbReference type="GO" id="GO:0006071">
    <property type="term" value="P:glycerol metabolic process"/>
    <property type="evidence" value="ECO:0000250"/>
    <property type="project" value="UniProtKB"/>
</dbReference>
<dbReference type="GO" id="GO:0006072">
    <property type="term" value="P:glycerol-3-phosphate metabolic process"/>
    <property type="evidence" value="ECO:0007669"/>
    <property type="project" value="InterPro"/>
</dbReference>
<dbReference type="CDD" id="cd07786">
    <property type="entry name" value="FGGY_EcGK_like"/>
    <property type="match status" value="1"/>
</dbReference>
<dbReference type="FunFam" id="3.30.420.40:FF:000007">
    <property type="entry name" value="Glycerol kinase"/>
    <property type="match status" value="1"/>
</dbReference>
<dbReference type="FunFam" id="3.30.420.40:FF:000008">
    <property type="entry name" value="Glycerol kinase"/>
    <property type="match status" value="1"/>
</dbReference>
<dbReference type="Gene3D" id="3.30.420.40">
    <property type="match status" value="2"/>
</dbReference>
<dbReference type="HAMAP" id="MF_00186">
    <property type="entry name" value="Glycerol_kin"/>
    <property type="match status" value="1"/>
</dbReference>
<dbReference type="InterPro" id="IPR043129">
    <property type="entry name" value="ATPase_NBD"/>
</dbReference>
<dbReference type="InterPro" id="IPR000577">
    <property type="entry name" value="Carb_kinase_FGGY"/>
</dbReference>
<dbReference type="InterPro" id="IPR018483">
    <property type="entry name" value="Carb_kinase_FGGY_CS"/>
</dbReference>
<dbReference type="InterPro" id="IPR018485">
    <property type="entry name" value="FGGY_C"/>
</dbReference>
<dbReference type="InterPro" id="IPR018484">
    <property type="entry name" value="FGGY_N"/>
</dbReference>
<dbReference type="InterPro" id="IPR005999">
    <property type="entry name" value="Glycerol_kin"/>
</dbReference>
<dbReference type="NCBIfam" id="TIGR01311">
    <property type="entry name" value="glycerol_kin"/>
    <property type="match status" value="1"/>
</dbReference>
<dbReference type="NCBIfam" id="NF000756">
    <property type="entry name" value="PRK00047.1"/>
    <property type="match status" value="1"/>
</dbReference>
<dbReference type="PANTHER" id="PTHR10196:SF69">
    <property type="entry name" value="GLYCEROL KINASE"/>
    <property type="match status" value="1"/>
</dbReference>
<dbReference type="PANTHER" id="PTHR10196">
    <property type="entry name" value="SUGAR KINASE"/>
    <property type="match status" value="1"/>
</dbReference>
<dbReference type="Pfam" id="PF02782">
    <property type="entry name" value="FGGY_C"/>
    <property type="match status" value="1"/>
</dbReference>
<dbReference type="Pfam" id="PF00370">
    <property type="entry name" value="FGGY_N"/>
    <property type="match status" value="1"/>
</dbReference>
<dbReference type="PIRSF" id="PIRSF000538">
    <property type="entry name" value="GlpK"/>
    <property type="match status" value="1"/>
</dbReference>
<dbReference type="SUPFAM" id="SSF53067">
    <property type="entry name" value="Actin-like ATPase domain"/>
    <property type="match status" value="2"/>
</dbReference>
<dbReference type="PROSITE" id="PS00933">
    <property type="entry name" value="FGGY_KINASES_1"/>
    <property type="match status" value="1"/>
</dbReference>
<dbReference type="PROSITE" id="PS00445">
    <property type="entry name" value="FGGY_KINASES_2"/>
    <property type="match status" value="1"/>
</dbReference>
<sequence length="500" mass="55606">MKKYIMALDQGTTSSRAILFDQEGKRVGSSQKEFTQFYPKAGWVEHDPMEIWGTQSGVAREVLETTGISTQDIAAIGITNQRETTIIWDKNTGKPIYNAIVWQCRRTAGICDELKAQGMETYIRENTGLVVDAYFSGTKVKWILDHVEGAREKAENGELLFGTVDSWLIWNLTRGKVHVTDYSNASRTMLYNIKELKWDEKILEALDIPKSMLPEVKASSEVYGHTDHQTFGGADIPIAGAAGDQQAALFGQACFQPGMAKNTYGTGCFMLMNTGEKFVPSENGLLTTLAWGVDGKVEYALEGSIFVAGAAVQWLRDELRIIRDAEDTEYLATKVADSNGVYVVPAFTGMGAPYWDMYARGAILGLTRGAKAEHIIRATLESIAYQTRDVLEAMQEDSGIELRSLKVDGGAVSNNFLMQFQADILGVQVDRPEIIETTALGAAYLAGLAVGFWRDKNEIANKWKVDTVFSPTMENTKKEKMYRGWKRAVNRALKWELEEE</sequence>
<organism>
    <name type="scientific">Alkaliphilus metalliredigens (strain QYMF)</name>
    <dbReference type="NCBI Taxonomy" id="293826"/>
    <lineage>
        <taxon>Bacteria</taxon>
        <taxon>Bacillati</taxon>
        <taxon>Bacillota</taxon>
        <taxon>Clostridia</taxon>
        <taxon>Peptostreptococcales</taxon>
        <taxon>Natronincolaceae</taxon>
        <taxon>Alkaliphilus</taxon>
    </lineage>
</organism>
<reference key="1">
    <citation type="journal article" date="2016" name="Genome Announc.">
        <title>Complete genome sequence of Alkaliphilus metalliredigens strain QYMF, an alkaliphilic and metal-reducing bacterium isolated from borax-contaminated leachate ponds.</title>
        <authorList>
            <person name="Hwang C."/>
            <person name="Copeland A."/>
            <person name="Lucas S."/>
            <person name="Lapidus A."/>
            <person name="Barry K."/>
            <person name="Detter J.C."/>
            <person name="Glavina Del Rio T."/>
            <person name="Hammon N."/>
            <person name="Israni S."/>
            <person name="Dalin E."/>
            <person name="Tice H."/>
            <person name="Pitluck S."/>
            <person name="Chertkov O."/>
            <person name="Brettin T."/>
            <person name="Bruce D."/>
            <person name="Han C."/>
            <person name="Schmutz J."/>
            <person name="Larimer F."/>
            <person name="Land M.L."/>
            <person name="Hauser L."/>
            <person name="Kyrpides N."/>
            <person name="Mikhailova N."/>
            <person name="Ye Q."/>
            <person name="Zhou J."/>
            <person name="Richardson P."/>
            <person name="Fields M.W."/>
        </authorList>
    </citation>
    <scope>NUCLEOTIDE SEQUENCE [LARGE SCALE GENOMIC DNA]</scope>
    <source>
        <strain>QYMF</strain>
    </source>
</reference>
<proteinExistence type="inferred from homology"/>